<protein>
    <recommendedName>
        <fullName evidence="1">Biosynthetic peptidoglycan transglycosylase</fullName>
        <ecNumber evidence="1">2.4.99.28</ecNumber>
    </recommendedName>
    <alternativeName>
        <fullName evidence="1">Glycan polymerase</fullName>
    </alternativeName>
    <alternativeName>
        <fullName evidence="1">Peptidoglycan glycosyltransferase MtgA</fullName>
        <shortName evidence="1">PGT</shortName>
    </alternativeName>
</protein>
<gene>
    <name evidence="1" type="primary">mtgA</name>
    <name type="ordered locus">Rleg2_3828</name>
</gene>
<sequence>MPARRQWFGDRRVLKRIVLAVLALVILPYALIFFYVLPFIHPVSTLMLRDLVLLRGYDRRWVSLDEIAPVLVQSVMMSEDGQYCFHGGVDWAEMRMLVEDTLKGQATRGGSTIPMQTAKNLFLWNSRSFVRKAMELPLAVSTDFVLSKRRLMEIYLNIAEWGPGIYGIEAAAQHHFKVPASKLTRRQASLLAVSLPNPIDRNAGKPGRGLRRLAGVIERRAQGSGDYIKCIYE</sequence>
<evidence type="ECO:0000255" key="1">
    <source>
        <dbReference type="HAMAP-Rule" id="MF_00766"/>
    </source>
</evidence>
<reference key="1">
    <citation type="journal article" date="2010" name="Stand. Genomic Sci.">
        <title>Complete genome sequence of Rhizobium leguminosarum bv trifolii strain WSM2304, an effective microsymbiont of the South American clover Trifolium polymorphum.</title>
        <authorList>
            <person name="Reeve W."/>
            <person name="O'Hara G."/>
            <person name="Chain P."/>
            <person name="Ardley J."/>
            <person name="Brau L."/>
            <person name="Nandesena K."/>
            <person name="Tiwari R."/>
            <person name="Malfatti S."/>
            <person name="Kiss H."/>
            <person name="Lapidus A."/>
            <person name="Copeland A."/>
            <person name="Nolan M."/>
            <person name="Land M."/>
            <person name="Ivanova N."/>
            <person name="Mavromatis K."/>
            <person name="Markowitz V."/>
            <person name="Kyrpides N."/>
            <person name="Melino V."/>
            <person name="Denton M."/>
            <person name="Yates R."/>
            <person name="Howieson J."/>
        </authorList>
    </citation>
    <scope>NUCLEOTIDE SEQUENCE [LARGE SCALE GENOMIC DNA]</scope>
    <source>
        <strain>WSM2304</strain>
    </source>
</reference>
<proteinExistence type="inferred from homology"/>
<feature type="chain" id="PRO_1000133601" description="Biosynthetic peptidoglycan transglycosylase">
    <location>
        <begin position="1"/>
        <end position="233"/>
    </location>
</feature>
<feature type="transmembrane region" description="Helical" evidence="1">
    <location>
        <begin position="17"/>
        <end position="37"/>
    </location>
</feature>
<organism>
    <name type="scientific">Rhizobium leguminosarum bv. trifolii (strain WSM2304)</name>
    <dbReference type="NCBI Taxonomy" id="395492"/>
    <lineage>
        <taxon>Bacteria</taxon>
        <taxon>Pseudomonadati</taxon>
        <taxon>Pseudomonadota</taxon>
        <taxon>Alphaproteobacteria</taxon>
        <taxon>Hyphomicrobiales</taxon>
        <taxon>Rhizobiaceae</taxon>
        <taxon>Rhizobium/Agrobacterium group</taxon>
        <taxon>Rhizobium</taxon>
    </lineage>
</organism>
<dbReference type="EC" id="2.4.99.28" evidence="1"/>
<dbReference type="EMBL" id="CP001191">
    <property type="protein sequence ID" value="ACI57090.1"/>
    <property type="molecule type" value="Genomic_DNA"/>
</dbReference>
<dbReference type="SMR" id="B5ZU97"/>
<dbReference type="STRING" id="395492.Rleg2_3828"/>
<dbReference type="CAZy" id="GT51">
    <property type="family name" value="Glycosyltransferase Family 51"/>
</dbReference>
<dbReference type="KEGG" id="rlt:Rleg2_3828"/>
<dbReference type="eggNOG" id="COG0744">
    <property type="taxonomic scope" value="Bacteria"/>
</dbReference>
<dbReference type="HOGENOM" id="CLU_006354_1_1_5"/>
<dbReference type="UniPathway" id="UPA00219"/>
<dbReference type="Proteomes" id="UP000008330">
    <property type="component" value="Chromosome"/>
</dbReference>
<dbReference type="GO" id="GO:0009274">
    <property type="term" value="C:peptidoglycan-based cell wall"/>
    <property type="evidence" value="ECO:0007669"/>
    <property type="project" value="InterPro"/>
</dbReference>
<dbReference type="GO" id="GO:0005886">
    <property type="term" value="C:plasma membrane"/>
    <property type="evidence" value="ECO:0007669"/>
    <property type="project" value="UniProtKB-SubCell"/>
</dbReference>
<dbReference type="GO" id="GO:0016763">
    <property type="term" value="F:pentosyltransferase activity"/>
    <property type="evidence" value="ECO:0007669"/>
    <property type="project" value="InterPro"/>
</dbReference>
<dbReference type="GO" id="GO:0008955">
    <property type="term" value="F:peptidoglycan glycosyltransferase activity"/>
    <property type="evidence" value="ECO:0007669"/>
    <property type="project" value="UniProtKB-UniRule"/>
</dbReference>
<dbReference type="GO" id="GO:0071555">
    <property type="term" value="P:cell wall organization"/>
    <property type="evidence" value="ECO:0007669"/>
    <property type="project" value="UniProtKB-KW"/>
</dbReference>
<dbReference type="GO" id="GO:0009252">
    <property type="term" value="P:peptidoglycan biosynthetic process"/>
    <property type="evidence" value="ECO:0007669"/>
    <property type="project" value="UniProtKB-UniRule"/>
</dbReference>
<dbReference type="GO" id="GO:0008360">
    <property type="term" value="P:regulation of cell shape"/>
    <property type="evidence" value="ECO:0007669"/>
    <property type="project" value="UniProtKB-KW"/>
</dbReference>
<dbReference type="Gene3D" id="1.10.3810.10">
    <property type="entry name" value="Biosynthetic peptidoglycan transglycosylase-like"/>
    <property type="match status" value="1"/>
</dbReference>
<dbReference type="HAMAP" id="MF_00766">
    <property type="entry name" value="PGT_MtgA"/>
    <property type="match status" value="1"/>
</dbReference>
<dbReference type="InterPro" id="IPR001264">
    <property type="entry name" value="Glyco_trans_51"/>
</dbReference>
<dbReference type="InterPro" id="IPR023346">
    <property type="entry name" value="Lysozyme-like_dom_sf"/>
</dbReference>
<dbReference type="InterPro" id="IPR036950">
    <property type="entry name" value="PBP_transglycosylase"/>
</dbReference>
<dbReference type="InterPro" id="IPR011812">
    <property type="entry name" value="Pep_trsgly"/>
</dbReference>
<dbReference type="NCBIfam" id="TIGR02070">
    <property type="entry name" value="mono_pep_trsgly"/>
    <property type="match status" value="1"/>
</dbReference>
<dbReference type="PANTHER" id="PTHR30400:SF0">
    <property type="entry name" value="BIOSYNTHETIC PEPTIDOGLYCAN TRANSGLYCOSYLASE"/>
    <property type="match status" value="1"/>
</dbReference>
<dbReference type="PANTHER" id="PTHR30400">
    <property type="entry name" value="MONOFUNCTIONAL BIOSYNTHETIC PEPTIDOGLYCAN TRANSGLYCOSYLASE"/>
    <property type="match status" value="1"/>
</dbReference>
<dbReference type="Pfam" id="PF00912">
    <property type="entry name" value="Transgly"/>
    <property type="match status" value="1"/>
</dbReference>
<dbReference type="SUPFAM" id="SSF53955">
    <property type="entry name" value="Lysozyme-like"/>
    <property type="match status" value="1"/>
</dbReference>
<comment type="function">
    <text evidence="1">Peptidoglycan polymerase that catalyzes glycan chain elongation from lipid-linked precursors.</text>
</comment>
<comment type="catalytic activity">
    <reaction evidence="1">
        <text>[GlcNAc-(1-&gt;4)-Mur2Ac(oyl-L-Ala-gamma-D-Glu-L-Lys-D-Ala-D-Ala)](n)-di-trans,octa-cis-undecaprenyl diphosphate + beta-D-GlcNAc-(1-&gt;4)-Mur2Ac(oyl-L-Ala-gamma-D-Glu-L-Lys-D-Ala-D-Ala)-di-trans,octa-cis-undecaprenyl diphosphate = [GlcNAc-(1-&gt;4)-Mur2Ac(oyl-L-Ala-gamma-D-Glu-L-Lys-D-Ala-D-Ala)](n+1)-di-trans,octa-cis-undecaprenyl diphosphate + di-trans,octa-cis-undecaprenyl diphosphate + H(+)</text>
        <dbReference type="Rhea" id="RHEA:23708"/>
        <dbReference type="Rhea" id="RHEA-COMP:9602"/>
        <dbReference type="Rhea" id="RHEA-COMP:9603"/>
        <dbReference type="ChEBI" id="CHEBI:15378"/>
        <dbReference type="ChEBI" id="CHEBI:58405"/>
        <dbReference type="ChEBI" id="CHEBI:60033"/>
        <dbReference type="ChEBI" id="CHEBI:78435"/>
        <dbReference type="EC" id="2.4.99.28"/>
    </reaction>
</comment>
<comment type="pathway">
    <text evidence="1">Cell wall biogenesis; peptidoglycan biosynthesis.</text>
</comment>
<comment type="subcellular location">
    <subcellularLocation>
        <location evidence="1">Cell inner membrane</location>
        <topology evidence="1">Single-pass membrane protein</topology>
    </subcellularLocation>
</comment>
<comment type="similarity">
    <text evidence="1">Belongs to the glycosyltransferase 51 family.</text>
</comment>
<name>MTGA_RHILW</name>
<accession>B5ZU97</accession>
<keyword id="KW-0997">Cell inner membrane</keyword>
<keyword id="KW-1003">Cell membrane</keyword>
<keyword id="KW-0133">Cell shape</keyword>
<keyword id="KW-0961">Cell wall biogenesis/degradation</keyword>
<keyword id="KW-0328">Glycosyltransferase</keyword>
<keyword id="KW-0472">Membrane</keyword>
<keyword id="KW-0573">Peptidoglycan synthesis</keyword>
<keyword id="KW-1185">Reference proteome</keyword>
<keyword id="KW-0808">Transferase</keyword>
<keyword id="KW-0812">Transmembrane</keyword>
<keyword id="KW-1133">Transmembrane helix</keyword>